<protein>
    <recommendedName>
        <fullName evidence="1">3-hydroxyacyl-[acyl-carrier-protein] dehydratase FabZ</fullName>
        <ecNumber evidence="1">4.2.1.59</ecNumber>
    </recommendedName>
    <alternativeName>
        <fullName evidence="1">(3R)-hydroxymyristoyl-[acyl-carrier-protein] dehydratase</fullName>
        <shortName evidence="1">(3R)-hydroxymyristoyl-ACP dehydrase</shortName>
    </alternativeName>
    <alternativeName>
        <fullName evidence="1">Beta-hydroxyacyl-ACP dehydratase</fullName>
    </alternativeName>
</protein>
<sequence length="144" mass="15980">MLNIEQIKEIIPHRYPFLLVDKILEVDEGKRAVGIKNVSANEEFFNGHFPDYAVMPGVLIVEALAQVGAVAVLKKEENRGRLAFFAGIDNCRFKKQVRPGDQLRLEVEMTRVRGPIGKGKAIATVDGEIACEAEITFAIGDKKE</sequence>
<gene>
    <name evidence="1" type="primary">fabZ</name>
    <name type="ordered locus">BCAH187_A5454</name>
</gene>
<accession>B7HY36</accession>
<reference key="1">
    <citation type="submission" date="2008-10" db="EMBL/GenBank/DDBJ databases">
        <title>Genome sequence of Bacillus cereus AH187.</title>
        <authorList>
            <person name="Dodson R.J."/>
            <person name="Durkin A.S."/>
            <person name="Rosovitz M.J."/>
            <person name="Rasko D.A."/>
            <person name="Kolsto A.B."/>
            <person name="Okstad O.A."/>
            <person name="Ravel J."/>
            <person name="Sutton G."/>
        </authorList>
    </citation>
    <scope>NUCLEOTIDE SEQUENCE [LARGE SCALE GENOMIC DNA]</scope>
    <source>
        <strain>AH187</strain>
    </source>
</reference>
<name>FABZ_BACC7</name>
<organism>
    <name type="scientific">Bacillus cereus (strain AH187)</name>
    <dbReference type="NCBI Taxonomy" id="405534"/>
    <lineage>
        <taxon>Bacteria</taxon>
        <taxon>Bacillati</taxon>
        <taxon>Bacillota</taxon>
        <taxon>Bacilli</taxon>
        <taxon>Bacillales</taxon>
        <taxon>Bacillaceae</taxon>
        <taxon>Bacillus</taxon>
        <taxon>Bacillus cereus group</taxon>
    </lineage>
</organism>
<dbReference type="EC" id="4.2.1.59" evidence="1"/>
<dbReference type="EMBL" id="CP001177">
    <property type="protein sequence ID" value="ACJ79639.1"/>
    <property type="molecule type" value="Genomic_DNA"/>
</dbReference>
<dbReference type="SMR" id="B7HY36"/>
<dbReference type="KEGG" id="bcr:BCAH187_A5454"/>
<dbReference type="HOGENOM" id="CLU_078912_3_0_9"/>
<dbReference type="Proteomes" id="UP000002214">
    <property type="component" value="Chromosome"/>
</dbReference>
<dbReference type="GO" id="GO:0005737">
    <property type="term" value="C:cytoplasm"/>
    <property type="evidence" value="ECO:0007669"/>
    <property type="project" value="UniProtKB-SubCell"/>
</dbReference>
<dbReference type="GO" id="GO:0016020">
    <property type="term" value="C:membrane"/>
    <property type="evidence" value="ECO:0007669"/>
    <property type="project" value="GOC"/>
</dbReference>
<dbReference type="GO" id="GO:0019171">
    <property type="term" value="F:(3R)-hydroxyacyl-[acyl-carrier-protein] dehydratase activity"/>
    <property type="evidence" value="ECO:0007669"/>
    <property type="project" value="UniProtKB-EC"/>
</dbReference>
<dbReference type="GO" id="GO:0006633">
    <property type="term" value="P:fatty acid biosynthetic process"/>
    <property type="evidence" value="ECO:0007669"/>
    <property type="project" value="UniProtKB-UniRule"/>
</dbReference>
<dbReference type="GO" id="GO:0009245">
    <property type="term" value="P:lipid A biosynthetic process"/>
    <property type="evidence" value="ECO:0007669"/>
    <property type="project" value="UniProtKB-UniRule"/>
</dbReference>
<dbReference type="CDD" id="cd01288">
    <property type="entry name" value="FabZ"/>
    <property type="match status" value="1"/>
</dbReference>
<dbReference type="FunFam" id="3.10.129.10:FF:000001">
    <property type="entry name" value="3-hydroxyacyl-[acyl-carrier-protein] dehydratase FabZ"/>
    <property type="match status" value="1"/>
</dbReference>
<dbReference type="Gene3D" id="3.10.129.10">
    <property type="entry name" value="Hotdog Thioesterase"/>
    <property type="match status" value="1"/>
</dbReference>
<dbReference type="HAMAP" id="MF_00406">
    <property type="entry name" value="FabZ"/>
    <property type="match status" value="1"/>
</dbReference>
<dbReference type="InterPro" id="IPR013114">
    <property type="entry name" value="FabA_FabZ"/>
</dbReference>
<dbReference type="InterPro" id="IPR010084">
    <property type="entry name" value="FabZ"/>
</dbReference>
<dbReference type="InterPro" id="IPR029069">
    <property type="entry name" value="HotDog_dom_sf"/>
</dbReference>
<dbReference type="NCBIfam" id="TIGR01750">
    <property type="entry name" value="fabZ"/>
    <property type="match status" value="1"/>
</dbReference>
<dbReference type="NCBIfam" id="NF000582">
    <property type="entry name" value="PRK00006.1"/>
    <property type="match status" value="1"/>
</dbReference>
<dbReference type="PANTHER" id="PTHR30272">
    <property type="entry name" value="3-HYDROXYACYL-[ACYL-CARRIER-PROTEIN] DEHYDRATASE"/>
    <property type="match status" value="1"/>
</dbReference>
<dbReference type="PANTHER" id="PTHR30272:SF1">
    <property type="entry name" value="3-HYDROXYACYL-[ACYL-CARRIER-PROTEIN] DEHYDRATASE"/>
    <property type="match status" value="1"/>
</dbReference>
<dbReference type="Pfam" id="PF07977">
    <property type="entry name" value="FabA"/>
    <property type="match status" value="1"/>
</dbReference>
<dbReference type="SUPFAM" id="SSF54637">
    <property type="entry name" value="Thioesterase/thiol ester dehydrase-isomerase"/>
    <property type="match status" value="1"/>
</dbReference>
<evidence type="ECO:0000255" key="1">
    <source>
        <dbReference type="HAMAP-Rule" id="MF_00406"/>
    </source>
</evidence>
<keyword id="KW-0963">Cytoplasm</keyword>
<keyword id="KW-0441">Lipid A biosynthesis</keyword>
<keyword id="KW-0444">Lipid biosynthesis</keyword>
<keyword id="KW-0443">Lipid metabolism</keyword>
<keyword id="KW-0456">Lyase</keyword>
<feature type="chain" id="PRO_1000197274" description="3-hydroxyacyl-[acyl-carrier-protein] dehydratase FabZ">
    <location>
        <begin position="1"/>
        <end position="144"/>
    </location>
</feature>
<feature type="active site" evidence="1">
    <location>
        <position position="48"/>
    </location>
</feature>
<comment type="function">
    <text evidence="1">Involved in unsaturated fatty acids biosynthesis. Catalyzes the dehydration of short chain beta-hydroxyacyl-ACPs and long chain saturated and unsaturated beta-hydroxyacyl-ACPs.</text>
</comment>
<comment type="catalytic activity">
    <reaction evidence="1">
        <text>a (3R)-hydroxyacyl-[ACP] = a (2E)-enoyl-[ACP] + H2O</text>
        <dbReference type="Rhea" id="RHEA:13097"/>
        <dbReference type="Rhea" id="RHEA-COMP:9925"/>
        <dbReference type="Rhea" id="RHEA-COMP:9945"/>
        <dbReference type="ChEBI" id="CHEBI:15377"/>
        <dbReference type="ChEBI" id="CHEBI:78784"/>
        <dbReference type="ChEBI" id="CHEBI:78827"/>
        <dbReference type="EC" id="4.2.1.59"/>
    </reaction>
</comment>
<comment type="subcellular location">
    <subcellularLocation>
        <location evidence="1">Cytoplasm</location>
    </subcellularLocation>
</comment>
<comment type="similarity">
    <text evidence="1">Belongs to the thioester dehydratase family. FabZ subfamily.</text>
</comment>
<proteinExistence type="inferred from homology"/>